<sequence length="130" mass="14380">MNGKYYYGTGRRKSSVARVFLTKGTGQIIVNGRPVDEFFARETSRMVVRQPLVLTENAESLDIKVNVVGGGETGQSGAIRHGITRALIDFDAALKPALSQAGFVTRDAREVERKKPGLRKARRAKQFSKR</sequence>
<organism>
    <name type="scientific">Neisseria gonorrhoeae (strain NCCP11945)</name>
    <dbReference type="NCBI Taxonomy" id="521006"/>
    <lineage>
        <taxon>Bacteria</taxon>
        <taxon>Pseudomonadati</taxon>
        <taxon>Pseudomonadota</taxon>
        <taxon>Betaproteobacteria</taxon>
        <taxon>Neisseriales</taxon>
        <taxon>Neisseriaceae</taxon>
        <taxon>Neisseria</taxon>
    </lineage>
</organism>
<reference key="1">
    <citation type="journal article" date="2008" name="J. Bacteriol.">
        <title>Complete genome sequence of Neisseria gonorrhoeae NCCP11945.</title>
        <authorList>
            <person name="Chung G.T."/>
            <person name="Yoo J.S."/>
            <person name="Oh H.B."/>
            <person name="Lee Y.S."/>
            <person name="Cha S.H."/>
            <person name="Kim S.J."/>
            <person name="Yoo C.K."/>
        </authorList>
    </citation>
    <scope>NUCLEOTIDE SEQUENCE [LARGE SCALE GENOMIC DNA]</scope>
    <source>
        <strain>NCCP11945</strain>
    </source>
</reference>
<feature type="chain" id="PRO_1000128145" description="Small ribosomal subunit protein uS9">
    <location>
        <begin position="1"/>
        <end position="130"/>
    </location>
</feature>
<proteinExistence type="inferred from homology"/>
<gene>
    <name evidence="1" type="primary">rpsI</name>
    <name type="ordered locus">NGK_2211</name>
</gene>
<protein>
    <recommendedName>
        <fullName evidence="1">Small ribosomal subunit protein uS9</fullName>
    </recommendedName>
    <alternativeName>
        <fullName evidence="2">30S ribosomal protein S9</fullName>
    </alternativeName>
</protein>
<keyword id="KW-0687">Ribonucleoprotein</keyword>
<keyword id="KW-0689">Ribosomal protein</keyword>
<comment type="similarity">
    <text evidence="1">Belongs to the universal ribosomal protein uS9 family.</text>
</comment>
<accession>B4RQK5</accession>
<dbReference type="EMBL" id="CP001050">
    <property type="protein sequence ID" value="ACF30815.1"/>
    <property type="molecule type" value="Genomic_DNA"/>
</dbReference>
<dbReference type="RefSeq" id="WP_003686946.1">
    <property type="nucleotide sequence ID" value="NC_011035.1"/>
</dbReference>
<dbReference type="SMR" id="B4RQK5"/>
<dbReference type="GeneID" id="66754086"/>
<dbReference type="KEGG" id="ngk:NGK_2211"/>
<dbReference type="HOGENOM" id="CLU_046483_2_1_4"/>
<dbReference type="Proteomes" id="UP000002564">
    <property type="component" value="Chromosome"/>
</dbReference>
<dbReference type="GO" id="GO:0022627">
    <property type="term" value="C:cytosolic small ribosomal subunit"/>
    <property type="evidence" value="ECO:0007669"/>
    <property type="project" value="TreeGrafter"/>
</dbReference>
<dbReference type="GO" id="GO:0003723">
    <property type="term" value="F:RNA binding"/>
    <property type="evidence" value="ECO:0007669"/>
    <property type="project" value="TreeGrafter"/>
</dbReference>
<dbReference type="GO" id="GO:0003735">
    <property type="term" value="F:structural constituent of ribosome"/>
    <property type="evidence" value="ECO:0007669"/>
    <property type="project" value="InterPro"/>
</dbReference>
<dbReference type="GO" id="GO:0006412">
    <property type="term" value="P:translation"/>
    <property type="evidence" value="ECO:0007669"/>
    <property type="project" value="UniProtKB-UniRule"/>
</dbReference>
<dbReference type="FunFam" id="3.30.230.10:FF:000001">
    <property type="entry name" value="30S ribosomal protein S9"/>
    <property type="match status" value="1"/>
</dbReference>
<dbReference type="Gene3D" id="3.30.230.10">
    <property type="match status" value="1"/>
</dbReference>
<dbReference type="HAMAP" id="MF_00532_B">
    <property type="entry name" value="Ribosomal_uS9_B"/>
    <property type="match status" value="1"/>
</dbReference>
<dbReference type="InterPro" id="IPR020568">
    <property type="entry name" value="Ribosomal_Su5_D2-typ_SF"/>
</dbReference>
<dbReference type="InterPro" id="IPR000754">
    <property type="entry name" value="Ribosomal_uS9"/>
</dbReference>
<dbReference type="InterPro" id="IPR023035">
    <property type="entry name" value="Ribosomal_uS9_bac/plastid"/>
</dbReference>
<dbReference type="InterPro" id="IPR020574">
    <property type="entry name" value="Ribosomal_uS9_CS"/>
</dbReference>
<dbReference type="InterPro" id="IPR014721">
    <property type="entry name" value="Ribsml_uS5_D2-typ_fold_subgr"/>
</dbReference>
<dbReference type="NCBIfam" id="NF001099">
    <property type="entry name" value="PRK00132.1"/>
    <property type="match status" value="1"/>
</dbReference>
<dbReference type="PANTHER" id="PTHR21569">
    <property type="entry name" value="RIBOSOMAL PROTEIN S9"/>
    <property type="match status" value="1"/>
</dbReference>
<dbReference type="PANTHER" id="PTHR21569:SF1">
    <property type="entry name" value="SMALL RIBOSOMAL SUBUNIT PROTEIN US9M"/>
    <property type="match status" value="1"/>
</dbReference>
<dbReference type="Pfam" id="PF00380">
    <property type="entry name" value="Ribosomal_S9"/>
    <property type="match status" value="1"/>
</dbReference>
<dbReference type="SUPFAM" id="SSF54211">
    <property type="entry name" value="Ribosomal protein S5 domain 2-like"/>
    <property type="match status" value="1"/>
</dbReference>
<dbReference type="PROSITE" id="PS00360">
    <property type="entry name" value="RIBOSOMAL_S9"/>
    <property type="match status" value="1"/>
</dbReference>
<evidence type="ECO:0000255" key="1">
    <source>
        <dbReference type="HAMAP-Rule" id="MF_00532"/>
    </source>
</evidence>
<evidence type="ECO:0000305" key="2"/>
<name>RS9_NEIG2</name>